<feature type="chain" id="PRO_1000068115" description="Large ribosomal subunit protein uL23">
    <location>
        <begin position="1"/>
        <end position="100"/>
    </location>
</feature>
<evidence type="ECO:0000255" key="1">
    <source>
        <dbReference type="HAMAP-Rule" id="MF_01369"/>
    </source>
</evidence>
<evidence type="ECO:0000305" key="2"/>
<reference key="1">
    <citation type="submission" date="2006-12" db="EMBL/GenBank/DDBJ databases">
        <title>Complete sequence of chromosome of Mycobacterium sp. KMS.</title>
        <authorList>
            <consortium name="US DOE Joint Genome Institute"/>
            <person name="Copeland A."/>
            <person name="Lucas S."/>
            <person name="Lapidus A."/>
            <person name="Barry K."/>
            <person name="Detter J.C."/>
            <person name="Glavina del Rio T."/>
            <person name="Hammon N."/>
            <person name="Israni S."/>
            <person name="Dalin E."/>
            <person name="Tice H."/>
            <person name="Pitluck S."/>
            <person name="Kiss H."/>
            <person name="Brettin T."/>
            <person name="Bruce D."/>
            <person name="Han C."/>
            <person name="Tapia R."/>
            <person name="Gilna P."/>
            <person name="Schmutz J."/>
            <person name="Larimer F."/>
            <person name="Land M."/>
            <person name="Hauser L."/>
            <person name="Kyrpides N."/>
            <person name="Mikhailova N."/>
            <person name="Miller C.D."/>
            <person name="Richardson P."/>
        </authorList>
    </citation>
    <scope>NUCLEOTIDE SEQUENCE [LARGE SCALE GENOMIC DNA]</scope>
    <source>
        <strain>KMS</strain>
    </source>
</reference>
<gene>
    <name evidence="1" type="primary">rplW</name>
    <name type="ordered locus">Mkms_1032</name>
</gene>
<comment type="function">
    <text evidence="1">One of the early assembly proteins it binds 23S rRNA. One of the proteins that surrounds the polypeptide exit tunnel on the outside of the ribosome. Forms the main docking site for trigger factor binding to the ribosome.</text>
</comment>
<comment type="subunit">
    <text evidence="1">Part of the 50S ribosomal subunit. Contacts protein L29, and trigger factor when it is bound to the ribosome.</text>
</comment>
<comment type="similarity">
    <text evidence="1">Belongs to the universal ribosomal protein uL23 family.</text>
</comment>
<name>RL23_MYCSK</name>
<proteinExistence type="inferred from homology"/>
<protein>
    <recommendedName>
        <fullName evidence="1">Large ribosomal subunit protein uL23</fullName>
    </recommendedName>
    <alternativeName>
        <fullName evidence="2">50S ribosomal protein L23</fullName>
    </alternativeName>
</protein>
<sequence>MATVTDPRDIILAPVISEKSYGLIEDNVYTFIVHPDSNKTQIKIAIEKIFKVKVDSVNTANRQGKRKRTRSGFGQRKSTKRAIVTLAAGSKPIDLFGAPA</sequence>
<dbReference type="EMBL" id="CP000518">
    <property type="protein sequence ID" value="ABL90246.1"/>
    <property type="molecule type" value="Genomic_DNA"/>
</dbReference>
<dbReference type="SMR" id="A1UBN8"/>
<dbReference type="STRING" id="189918.Mkms_1032"/>
<dbReference type="KEGG" id="mkm:Mkms_1032"/>
<dbReference type="HOGENOM" id="CLU_037562_3_2_11"/>
<dbReference type="OrthoDB" id="9793353at2"/>
<dbReference type="GO" id="GO:1990904">
    <property type="term" value="C:ribonucleoprotein complex"/>
    <property type="evidence" value="ECO:0007669"/>
    <property type="project" value="UniProtKB-KW"/>
</dbReference>
<dbReference type="GO" id="GO:0005840">
    <property type="term" value="C:ribosome"/>
    <property type="evidence" value="ECO:0007669"/>
    <property type="project" value="UniProtKB-KW"/>
</dbReference>
<dbReference type="GO" id="GO:0019843">
    <property type="term" value="F:rRNA binding"/>
    <property type="evidence" value="ECO:0007669"/>
    <property type="project" value="UniProtKB-UniRule"/>
</dbReference>
<dbReference type="GO" id="GO:0003735">
    <property type="term" value="F:structural constituent of ribosome"/>
    <property type="evidence" value="ECO:0007669"/>
    <property type="project" value="InterPro"/>
</dbReference>
<dbReference type="GO" id="GO:0006412">
    <property type="term" value="P:translation"/>
    <property type="evidence" value="ECO:0007669"/>
    <property type="project" value="UniProtKB-UniRule"/>
</dbReference>
<dbReference type="FunFam" id="3.30.70.330:FF:000001">
    <property type="entry name" value="50S ribosomal protein L23"/>
    <property type="match status" value="1"/>
</dbReference>
<dbReference type="Gene3D" id="3.30.70.330">
    <property type="match status" value="1"/>
</dbReference>
<dbReference type="HAMAP" id="MF_01369_B">
    <property type="entry name" value="Ribosomal_uL23_B"/>
    <property type="match status" value="1"/>
</dbReference>
<dbReference type="InterPro" id="IPR012677">
    <property type="entry name" value="Nucleotide-bd_a/b_plait_sf"/>
</dbReference>
<dbReference type="InterPro" id="IPR013025">
    <property type="entry name" value="Ribosomal_uL23-like"/>
</dbReference>
<dbReference type="InterPro" id="IPR012678">
    <property type="entry name" value="Ribosomal_uL23/eL15/eS24_sf"/>
</dbReference>
<dbReference type="InterPro" id="IPR001014">
    <property type="entry name" value="Ribosomal_uL23_CS"/>
</dbReference>
<dbReference type="NCBIfam" id="NF004363">
    <property type="entry name" value="PRK05738.2-4"/>
    <property type="match status" value="1"/>
</dbReference>
<dbReference type="NCBIfam" id="NF004364">
    <property type="entry name" value="PRK05738.2-5"/>
    <property type="match status" value="1"/>
</dbReference>
<dbReference type="PANTHER" id="PTHR11620">
    <property type="entry name" value="60S RIBOSOMAL PROTEIN L23A"/>
    <property type="match status" value="1"/>
</dbReference>
<dbReference type="Pfam" id="PF00276">
    <property type="entry name" value="Ribosomal_L23"/>
    <property type="match status" value="1"/>
</dbReference>
<dbReference type="SUPFAM" id="SSF54189">
    <property type="entry name" value="Ribosomal proteins S24e, L23 and L15e"/>
    <property type="match status" value="1"/>
</dbReference>
<dbReference type="PROSITE" id="PS00050">
    <property type="entry name" value="RIBOSOMAL_L23"/>
    <property type="match status" value="1"/>
</dbReference>
<accession>A1UBN8</accession>
<organism>
    <name type="scientific">Mycobacterium sp. (strain KMS)</name>
    <dbReference type="NCBI Taxonomy" id="189918"/>
    <lineage>
        <taxon>Bacteria</taxon>
        <taxon>Bacillati</taxon>
        <taxon>Actinomycetota</taxon>
        <taxon>Actinomycetes</taxon>
        <taxon>Mycobacteriales</taxon>
        <taxon>Mycobacteriaceae</taxon>
        <taxon>Mycobacterium</taxon>
    </lineage>
</organism>
<keyword id="KW-0687">Ribonucleoprotein</keyword>
<keyword id="KW-0689">Ribosomal protein</keyword>
<keyword id="KW-0694">RNA-binding</keyword>
<keyword id="KW-0699">rRNA-binding</keyword>